<organism>
    <name type="scientific">Bacillus pumilus (strain SAFR-032)</name>
    <dbReference type="NCBI Taxonomy" id="315750"/>
    <lineage>
        <taxon>Bacteria</taxon>
        <taxon>Bacillati</taxon>
        <taxon>Bacillota</taxon>
        <taxon>Bacilli</taxon>
        <taxon>Bacillales</taxon>
        <taxon>Bacillaceae</taxon>
        <taxon>Bacillus</taxon>
    </lineage>
</organism>
<gene>
    <name evidence="1" type="primary">apt</name>
    <name type="ordered locus">BPUM_2402</name>
</gene>
<sequence length="170" mass="18874">MDLKQYVTVVPDYPKEGVQFKDITTLMDKGEVYRYATDQIVEYAKERDIDLIVGPEARGFIIGCPVAYALGVGFAPVRKEGKLPREVVKVEYGLEYGKDVLTIHKDAIRPGQRVLITDDLLATGGTIEASIKLVEELGGVVAGIAFLIELTYLDGRKKLDGYDILTLMQY</sequence>
<keyword id="KW-0963">Cytoplasm</keyword>
<keyword id="KW-0328">Glycosyltransferase</keyword>
<keyword id="KW-0660">Purine salvage</keyword>
<keyword id="KW-0808">Transferase</keyword>
<name>APT_BACP2</name>
<accession>A8FFQ0</accession>
<proteinExistence type="inferred from homology"/>
<feature type="chain" id="PRO_1000057029" description="Adenine phosphoribosyltransferase">
    <location>
        <begin position="1"/>
        <end position="170"/>
    </location>
</feature>
<evidence type="ECO:0000255" key="1">
    <source>
        <dbReference type="HAMAP-Rule" id="MF_00004"/>
    </source>
</evidence>
<reference key="1">
    <citation type="journal article" date="2007" name="PLoS ONE">
        <title>Paradoxical DNA repair and peroxide resistance gene conservation in Bacillus pumilus SAFR-032.</title>
        <authorList>
            <person name="Gioia J."/>
            <person name="Yerrapragada S."/>
            <person name="Qin X."/>
            <person name="Jiang H."/>
            <person name="Igboeli O.C."/>
            <person name="Muzny D."/>
            <person name="Dugan-Rocha S."/>
            <person name="Ding Y."/>
            <person name="Hawes A."/>
            <person name="Liu W."/>
            <person name="Perez L."/>
            <person name="Kovar C."/>
            <person name="Dinh H."/>
            <person name="Lee S."/>
            <person name="Nazareth L."/>
            <person name="Blyth P."/>
            <person name="Holder M."/>
            <person name="Buhay C."/>
            <person name="Tirumalai M.R."/>
            <person name="Liu Y."/>
            <person name="Dasgupta I."/>
            <person name="Bokhetache L."/>
            <person name="Fujita M."/>
            <person name="Karouia F."/>
            <person name="Eswara Moorthy P."/>
            <person name="Siefert J."/>
            <person name="Uzman A."/>
            <person name="Buzumbo P."/>
            <person name="Verma A."/>
            <person name="Zwiya H."/>
            <person name="McWilliams B.D."/>
            <person name="Olowu A."/>
            <person name="Clinkenbeard K.D."/>
            <person name="Newcombe D."/>
            <person name="Golebiewski L."/>
            <person name="Petrosino J.F."/>
            <person name="Nicholson W.L."/>
            <person name="Fox G.E."/>
            <person name="Venkateswaran K."/>
            <person name="Highlander S.K."/>
            <person name="Weinstock G.M."/>
        </authorList>
    </citation>
    <scope>NUCLEOTIDE SEQUENCE [LARGE SCALE GENOMIC DNA]</scope>
    <source>
        <strain>SAFR-032</strain>
    </source>
</reference>
<comment type="function">
    <text evidence="1">Catalyzes a salvage reaction resulting in the formation of AMP, that is energically less costly than de novo synthesis.</text>
</comment>
<comment type="catalytic activity">
    <reaction evidence="1">
        <text>AMP + diphosphate = 5-phospho-alpha-D-ribose 1-diphosphate + adenine</text>
        <dbReference type="Rhea" id="RHEA:16609"/>
        <dbReference type="ChEBI" id="CHEBI:16708"/>
        <dbReference type="ChEBI" id="CHEBI:33019"/>
        <dbReference type="ChEBI" id="CHEBI:58017"/>
        <dbReference type="ChEBI" id="CHEBI:456215"/>
        <dbReference type="EC" id="2.4.2.7"/>
    </reaction>
</comment>
<comment type="pathway">
    <text evidence="1">Purine metabolism; AMP biosynthesis via salvage pathway; AMP from adenine: step 1/1.</text>
</comment>
<comment type="subunit">
    <text evidence="1">Homodimer.</text>
</comment>
<comment type="subcellular location">
    <subcellularLocation>
        <location evidence="1">Cytoplasm</location>
    </subcellularLocation>
</comment>
<comment type="similarity">
    <text evidence="1">Belongs to the purine/pyrimidine phosphoribosyltransferase family.</text>
</comment>
<protein>
    <recommendedName>
        <fullName evidence="1">Adenine phosphoribosyltransferase</fullName>
        <shortName evidence="1">APRT</shortName>
        <ecNumber evidence="1">2.4.2.7</ecNumber>
    </recommendedName>
</protein>
<dbReference type="EC" id="2.4.2.7" evidence="1"/>
<dbReference type="EMBL" id="CP000813">
    <property type="protein sequence ID" value="ABV63067.1"/>
    <property type="molecule type" value="Genomic_DNA"/>
</dbReference>
<dbReference type="RefSeq" id="WP_003216770.1">
    <property type="nucleotide sequence ID" value="NZ_VEIS01000010.1"/>
</dbReference>
<dbReference type="SMR" id="A8FFQ0"/>
<dbReference type="STRING" id="315750.BPUM_2402"/>
<dbReference type="GeneID" id="5621666"/>
<dbReference type="KEGG" id="bpu:BPUM_2402"/>
<dbReference type="eggNOG" id="COG0503">
    <property type="taxonomic scope" value="Bacteria"/>
</dbReference>
<dbReference type="HOGENOM" id="CLU_063339_3_0_9"/>
<dbReference type="OrthoDB" id="9803963at2"/>
<dbReference type="UniPathway" id="UPA00588">
    <property type="reaction ID" value="UER00646"/>
</dbReference>
<dbReference type="Proteomes" id="UP000001355">
    <property type="component" value="Chromosome"/>
</dbReference>
<dbReference type="GO" id="GO:0005737">
    <property type="term" value="C:cytoplasm"/>
    <property type="evidence" value="ECO:0007669"/>
    <property type="project" value="UniProtKB-SubCell"/>
</dbReference>
<dbReference type="GO" id="GO:0002055">
    <property type="term" value="F:adenine binding"/>
    <property type="evidence" value="ECO:0007669"/>
    <property type="project" value="TreeGrafter"/>
</dbReference>
<dbReference type="GO" id="GO:0003999">
    <property type="term" value="F:adenine phosphoribosyltransferase activity"/>
    <property type="evidence" value="ECO:0007669"/>
    <property type="project" value="UniProtKB-UniRule"/>
</dbReference>
<dbReference type="GO" id="GO:0016208">
    <property type="term" value="F:AMP binding"/>
    <property type="evidence" value="ECO:0007669"/>
    <property type="project" value="TreeGrafter"/>
</dbReference>
<dbReference type="GO" id="GO:0006168">
    <property type="term" value="P:adenine salvage"/>
    <property type="evidence" value="ECO:0007669"/>
    <property type="project" value="InterPro"/>
</dbReference>
<dbReference type="GO" id="GO:0044209">
    <property type="term" value="P:AMP salvage"/>
    <property type="evidence" value="ECO:0007669"/>
    <property type="project" value="UniProtKB-UniRule"/>
</dbReference>
<dbReference type="GO" id="GO:0006166">
    <property type="term" value="P:purine ribonucleoside salvage"/>
    <property type="evidence" value="ECO:0007669"/>
    <property type="project" value="UniProtKB-KW"/>
</dbReference>
<dbReference type="CDD" id="cd06223">
    <property type="entry name" value="PRTases_typeI"/>
    <property type="match status" value="1"/>
</dbReference>
<dbReference type="FunFam" id="3.40.50.2020:FF:000004">
    <property type="entry name" value="Adenine phosphoribosyltransferase"/>
    <property type="match status" value="1"/>
</dbReference>
<dbReference type="Gene3D" id="3.40.50.2020">
    <property type="match status" value="1"/>
</dbReference>
<dbReference type="HAMAP" id="MF_00004">
    <property type="entry name" value="Aden_phosphoribosyltr"/>
    <property type="match status" value="1"/>
</dbReference>
<dbReference type="InterPro" id="IPR005764">
    <property type="entry name" value="Ade_phspho_trans"/>
</dbReference>
<dbReference type="InterPro" id="IPR000836">
    <property type="entry name" value="PRibTrfase_dom"/>
</dbReference>
<dbReference type="InterPro" id="IPR029057">
    <property type="entry name" value="PRTase-like"/>
</dbReference>
<dbReference type="InterPro" id="IPR050054">
    <property type="entry name" value="UPRTase/APRTase"/>
</dbReference>
<dbReference type="NCBIfam" id="TIGR01090">
    <property type="entry name" value="apt"/>
    <property type="match status" value="1"/>
</dbReference>
<dbReference type="NCBIfam" id="NF002633">
    <property type="entry name" value="PRK02304.1-2"/>
    <property type="match status" value="1"/>
</dbReference>
<dbReference type="NCBIfam" id="NF002634">
    <property type="entry name" value="PRK02304.1-3"/>
    <property type="match status" value="1"/>
</dbReference>
<dbReference type="NCBIfam" id="NF002636">
    <property type="entry name" value="PRK02304.1-5"/>
    <property type="match status" value="1"/>
</dbReference>
<dbReference type="PANTHER" id="PTHR32315">
    <property type="entry name" value="ADENINE PHOSPHORIBOSYLTRANSFERASE"/>
    <property type="match status" value="1"/>
</dbReference>
<dbReference type="PANTHER" id="PTHR32315:SF3">
    <property type="entry name" value="ADENINE PHOSPHORIBOSYLTRANSFERASE"/>
    <property type="match status" value="1"/>
</dbReference>
<dbReference type="Pfam" id="PF00156">
    <property type="entry name" value="Pribosyltran"/>
    <property type="match status" value="1"/>
</dbReference>
<dbReference type="SUPFAM" id="SSF53271">
    <property type="entry name" value="PRTase-like"/>
    <property type="match status" value="1"/>
</dbReference>